<comment type="function">
    <text evidence="2">Reversibly blocks Kv11/ERG potassium channels.</text>
</comment>
<comment type="subcellular location">
    <subcellularLocation>
        <location evidence="4">Secreted</location>
    </subcellularLocation>
</comment>
<comment type="tissue specificity">
    <text evidence="6">Expressed by the venom gland.</text>
</comment>
<comment type="domain">
    <text evidence="1">The presence of a 'disulfide through disulfide knot' structurally defines this protein as a knottin.</text>
</comment>
<comment type="domain">
    <text evidence="3">Has the CSalpha/beta fold, which comprises one or two short alpha helices connected to anti-parallel beta-sheets stabilized by three or four disulfide bonds.</text>
</comment>
<comment type="similarity">
    <text evidence="6">Belongs to the ergtoxin family. Gamma-KTx 4 subfamily.</text>
</comment>
<sequence length="43" mass="4821">DRDSCVDKSKCAKYGYYGQCDECCKKAGDRAGNCVYLKCKCNQ</sequence>
<dbReference type="EMBL" id="AY159346">
    <property type="protein sequence ID" value="AAO22224.1"/>
    <property type="molecule type" value="mRNA"/>
</dbReference>
<dbReference type="SMR" id="Q86QU7"/>
<dbReference type="GO" id="GO:0005576">
    <property type="term" value="C:extracellular region"/>
    <property type="evidence" value="ECO:0007669"/>
    <property type="project" value="UniProtKB-SubCell"/>
</dbReference>
<dbReference type="GO" id="GO:0019870">
    <property type="term" value="F:potassium channel inhibitor activity"/>
    <property type="evidence" value="ECO:0007669"/>
    <property type="project" value="InterPro"/>
</dbReference>
<dbReference type="GO" id="GO:0090729">
    <property type="term" value="F:toxin activity"/>
    <property type="evidence" value="ECO:0007669"/>
    <property type="project" value="UniProtKB-KW"/>
</dbReference>
<dbReference type="Gene3D" id="3.30.30.10">
    <property type="entry name" value="Knottin, scorpion toxin-like"/>
    <property type="match status" value="1"/>
</dbReference>
<dbReference type="InterPro" id="IPR012622">
    <property type="entry name" value="Ergtoxin"/>
</dbReference>
<dbReference type="InterPro" id="IPR036574">
    <property type="entry name" value="Scorpion_toxin-like_sf"/>
</dbReference>
<dbReference type="Pfam" id="PF08086">
    <property type="entry name" value="Toxin_17"/>
    <property type="match status" value="1"/>
</dbReference>
<dbReference type="SUPFAM" id="SSF57095">
    <property type="entry name" value="Scorpion toxin-like"/>
    <property type="match status" value="1"/>
</dbReference>
<dbReference type="PROSITE" id="PS60026">
    <property type="entry name" value="ERGTX"/>
    <property type="match status" value="1"/>
</dbReference>
<evidence type="ECO:0000250" key="1"/>
<evidence type="ECO:0000250" key="2">
    <source>
        <dbReference type="UniProtKB" id="P59940"/>
    </source>
</evidence>
<evidence type="ECO:0000250" key="3">
    <source>
        <dbReference type="UniProtKB" id="Q86QT3"/>
    </source>
</evidence>
<evidence type="ECO:0000250" key="4">
    <source>
        <dbReference type="UniProtKB" id="Q86QU9"/>
    </source>
</evidence>
<evidence type="ECO:0000303" key="5">
    <source>
    </source>
</evidence>
<evidence type="ECO:0000305" key="6"/>
<organism>
    <name type="scientific">Centruroides limpidus</name>
    <name type="common">Mexican scorpion</name>
    <dbReference type="NCBI Taxonomy" id="6876"/>
    <lineage>
        <taxon>Eukaryota</taxon>
        <taxon>Metazoa</taxon>
        <taxon>Ecdysozoa</taxon>
        <taxon>Arthropoda</taxon>
        <taxon>Chelicerata</taxon>
        <taxon>Arachnida</taxon>
        <taxon>Scorpiones</taxon>
        <taxon>Buthida</taxon>
        <taxon>Buthoidea</taxon>
        <taxon>Buthidae</taxon>
        <taxon>Centruroides</taxon>
    </lineage>
</organism>
<feature type="chain" id="PRO_0000066853" description="Potassium channel toxin gamma-KTx 4.7">
    <location>
        <begin position="1"/>
        <end position="43"/>
    </location>
</feature>
<feature type="disulfide bond" evidence="3">
    <location>
        <begin position="5"/>
        <end position="23"/>
    </location>
</feature>
<feature type="disulfide bond" evidence="3">
    <location>
        <begin position="11"/>
        <end position="34"/>
    </location>
</feature>
<feature type="disulfide bond" evidence="3">
    <location>
        <begin position="20"/>
        <end position="39"/>
    </location>
</feature>
<feature type="disulfide bond" evidence="3">
    <location>
        <begin position="24"/>
        <end position="41"/>
    </location>
</feature>
<name>KGX47_CENLI</name>
<accession>Q86QU7</accession>
<protein>
    <recommendedName>
        <fullName evidence="5">Potassium channel toxin gamma-KTx 4.7</fullName>
    </recommendedName>
    <alternativeName>
        <fullName evidence="6">CllErgTx4</fullName>
        <shortName evidence="5">CllErg4</shortName>
        <shortName evidence="5">ErgTx4</shortName>
    </alternativeName>
    <alternativeName>
        <fullName evidence="5">Ergtoxin-like protein</fullName>
    </alternativeName>
</protein>
<reference key="1">
    <citation type="journal article" date="2002" name="FEBS Lett.">
        <title>A large number of novel Ergtoxin-like genes and ERG K+-channels blocking peptides from scorpions of the genus Centruroides.</title>
        <authorList>
            <person name="Corona M."/>
            <person name="Gurrola G.B."/>
            <person name="Merino E."/>
            <person name="Cassulini R.R."/>
            <person name="Valdez-Cruz N.A."/>
            <person name="Garcia B."/>
            <person name="Ramirez-Dominguez M.E."/>
            <person name="Coronas F.I."/>
            <person name="Zamudio F.Z."/>
            <person name="Wanke E."/>
            <person name="Possani L.D."/>
        </authorList>
    </citation>
    <scope>NUCLEOTIDE SEQUENCE [MRNA]</scope>
    <scope>NOMENCLATURE</scope>
    <source>
        <tissue>Venom gland</tissue>
    </source>
</reference>
<proteinExistence type="inferred from homology"/>
<keyword id="KW-1015">Disulfide bond</keyword>
<keyword id="KW-0872">Ion channel impairing toxin</keyword>
<keyword id="KW-0960">Knottin</keyword>
<keyword id="KW-0528">Neurotoxin</keyword>
<keyword id="KW-0632">Potassium channel impairing toxin</keyword>
<keyword id="KW-0964">Secreted</keyword>
<keyword id="KW-0800">Toxin</keyword>
<keyword id="KW-1220">Voltage-gated potassium channel impairing toxin</keyword>